<feature type="chain" id="PRO_0000199287" description="Uncharacterized phycocyanin operon protein Y">
    <location>
        <begin position="1"/>
        <end position="420"/>
    </location>
</feature>
<proteinExistence type="predicted"/>
<organism>
    <name type="scientific">Pseudanabaena tenuis (strain PCC 7409)</name>
    <dbReference type="NCBI Taxonomy" id="29415"/>
    <lineage>
        <taxon>Bacteria</taxon>
        <taxon>Bacillati</taxon>
        <taxon>Cyanobacteriota</taxon>
        <taxon>Cyanophyceae</taxon>
        <taxon>Pseudanabaenales</taxon>
        <taxon>Pseudanabaenaceae</taxon>
        <taxon>Pseudanabaena</taxon>
    </lineage>
</organism>
<sequence>MDKRFYSFFNLTEDQAIAILDTPQDQIGEDDSRYIAASHLVNFNSERSIAALMRAIHHTDPEMENRIVRRKAVETLGRLRATVALPVIRECLSDPDCYMIENAVWAIGEIGTEDPEILQEIMLLLDRSEQTYRVIIQTLAKLDYKPAIAKIKPFTTDESLPISSAAITALCRLNRDFSQMDQIVTLLQNRNVIARRLSIQDLIDANYYAAIPDISRCPVSLVFRLRGIGMLSEAGIQEGAIAFVDIQPYLEKSLIDHPSSLSLVHSYDTLPDLSFLIHELYETDFGRCYTAIKTILENYAESAPEALFNTYEQEAKNDYGAHFHVMKLFPWLRHAPAYNLLIEALHNKQPQFQKSRAAAAIALAEIGDPRAIPEIKSCLTAQIWDLKYASLLALEKFGDRSGYELLANDDDLLIREKRNS</sequence>
<dbReference type="EMBL" id="X63073">
    <property type="protein sequence ID" value="CAA44796.1"/>
    <property type="molecule type" value="Genomic_DNA"/>
</dbReference>
<dbReference type="SMR" id="P29299"/>
<dbReference type="GO" id="GO:0030089">
    <property type="term" value="C:phycobilisome"/>
    <property type="evidence" value="ECO:0007669"/>
    <property type="project" value="UniProtKB-KW"/>
</dbReference>
<dbReference type="GO" id="GO:0016491">
    <property type="term" value="F:oxidoreductase activity"/>
    <property type="evidence" value="ECO:0007669"/>
    <property type="project" value="TreeGrafter"/>
</dbReference>
<dbReference type="Gene3D" id="1.25.10.10">
    <property type="entry name" value="Leucine-rich Repeat Variant"/>
    <property type="match status" value="2"/>
</dbReference>
<dbReference type="InterPro" id="IPR011989">
    <property type="entry name" value="ARM-like"/>
</dbReference>
<dbReference type="InterPro" id="IPR016024">
    <property type="entry name" value="ARM-type_fold"/>
</dbReference>
<dbReference type="InterPro" id="IPR004155">
    <property type="entry name" value="PBS_lyase_HEAT"/>
</dbReference>
<dbReference type="PANTHER" id="PTHR12697:SF5">
    <property type="entry name" value="DEOXYHYPUSINE HYDROXYLASE"/>
    <property type="match status" value="1"/>
</dbReference>
<dbReference type="PANTHER" id="PTHR12697">
    <property type="entry name" value="PBS LYASE HEAT-LIKE PROTEIN"/>
    <property type="match status" value="1"/>
</dbReference>
<dbReference type="Pfam" id="PF13646">
    <property type="entry name" value="HEAT_2"/>
    <property type="match status" value="2"/>
</dbReference>
<dbReference type="SMART" id="SM00567">
    <property type="entry name" value="EZ_HEAT"/>
    <property type="match status" value="4"/>
</dbReference>
<dbReference type="SUPFAM" id="SSF48371">
    <property type="entry name" value="ARM repeat"/>
    <property type="match status" value="1"/>
</dbReference>
<keyword id="KW-0042">Antenna complex</keyword>
<keyword id="KW-0605">Phycobilisome</keyword>
<accession>P29299</accession>
<reference key="1">
    <citation type="journal article" date="1991" name="Mol. Microbiol.">
        <title>Molecular cloning and transcriptional analysis of the cpeBA operon of the cyanobacterium Pseudanabaena species PCC7409.</title>
        <authorList>
            <person name="Dubbs J.M."/>
            <person name="Bryant D.A."/>
        </authorList>
    </citation>
    <scope>NUCLEOTIDE SEQUENCE [GENOMIC DNA]</scope>
</reference>
<protein>
    <recommendedName>
        <fullName>Uncharacterized phycocyanin operon protein Y</fullName>
    </recommendedName>
    <alternativeName>
        <fullName>ORF Y</fullName>
    </alternativeName>
</protein>
<name>YCPY_PSETP</name>